<dbReference type="EC" id="1.11.-.-" evidence="18"/>
<dbReference type="EMBL" id="JN186799">
    <property type="protein sequence ID" value="AET79180.1"/>
    <property type="molecule type" value="Genomic_DNA"/>
</dbReference>
<dbReference type="EMBL" id="CAGA01000020">
    <property type="protein sequence ID" value="CCE30233.1"/>
    <property type="molecule type" value="Genomic_DNA"/>
</dbReference>
<dbReference type="SMR" id="M1WA44"/>
<dbReference type="STRING" id="1111077.M1WA44"/>
<dbReference type="VEuPathDB" id="FungiDB:CPUR_04081"/>
<dbReference type="eggNOG" id="KOG0047">
    <property type="taxonomic scope" value="Eukaryota"/>
</dbReference>
<dbReference type="HOGENOM" id="CLU_010645_2_0_1"/>
<dbReference type="OrthoDB" id="6880011at2759"/>
<dbReference type="PhylomeDB" id="M1WA44"/>
<dbReference type="UniPathway" id="UPA00327"/>
<dbReference type="Proteomes" id="UP000016801">
    <property type="component" value="Unassembled WGS sequence"/>
</dbReference>
<dbReference type="GO" id="GO:0005739">
    <property type="term" value="C:mitochondrion"/>
    <property type="evidence" value="ECO:0007669"/>
    <property type="project" value="TreeGrafter"/>
</dbReference>
<dbReference type="GO" id="GO:0005777">
    <property type="term" value="C:peroxisome"/>
    <property type="evidence" value="ECO:0007669"/>
    <property type="project" value="TreeGrafter"/>
</dbReference>
<dbReference type="GO" id="GO:0004096">
    <property type="term" value="F:catalase activity"/>
    <property type="evidence" value="ECO:0007669"/>
    <property type="project" value="InterPro"/>
</dbReference>
<dbReference type="GO" id="GO:0020037">
    <property type="term" value="F:heme binding"/>
    <property type="evidence" value="ECO:0007669"/>
    <property type="project" value="InterPro"/>
</dbReference>
<dbReference type="GO" id="GO:0046872">
    <property type="term" value="F:metal ion binding"/>
    <property type="evidence" value="ECO:0007669"/>
    <property type="project" value="UniProtKB-KW"/>
</dbReference>
<dbReference type="GO" id="GO:0042744">
    <property type="term" value="P:hydrogen peroxide catabolic process"/>
    <property type="evidence" value="ECO:0007669"/>
    <property type="project" value="UniProtKB-KW"/>
</dbReference>
<dbReference type="GO" id="GO:0035835">
    <property type="term" value="P:indole alkaloid biosynthetic process"/>
    <property type="evidence" value="ECO:0007669"/>
    <property type="project" value="UniProtKB-UniPathway"/>
</dbReference>
<dbReference type="GO" id="GO:0042542">
    <property type="term" value="P:response to hydrogen peroxide"/>
    <property type="evidence" value="ECO:0007669"/>
    <property type="project" value="TreeGrafter"/>
</dbReference>
<dbReference type="CDD" id="cd08157">
    <property type="entry name" value="catalase_fungal"/>
    <property type="match status" value="1"/>
</dbReference>
<dbReference type="Gene3D" id="2.40.180.10">
    <property type="entry name" value="Catalase core domain"/>
    <property type="match status" value="1"/>
</dbReference>
<dbReference type="InterPro" id="IPR018028">
    <property type="entry name" value="Catalase"/>
</dbReference>
<dbReference type="InterPro" id="IPR024708">
    <property type="entry name" value="Catalase_AS"/>
</dbReference>
<dbReference type="InterPro" id="IPR024711">
    <property type="entry name" value="Catalase_clade1/3"/>
</dbReference>
<dbReference type="InterPro" id="IPR011614">
    <property type="entry name" value="Catalase_core"/>
</dbReference>
<dbReference type="InterPro" id="IPR002226">
    <property type="entry name" value="Catalase_haem_BS"/>
</dbReference>
<dbReference type="InterPro" id="IPR020835">
    <property type="entry name" value="Catalase_sf"/>
</dbReference>
<dbReference type="PANTHER" id="PTHR11465">
    <property type="entry name" value="CATALASE"/>
    <property type="match status" value="1"/>
</dbReference>
<dbReference type="PANTHER" id="PTHR11465:SF9">
    <property type="entry name" value="CATALASE"/>
    <property type="match status" value="1"/>
</dbReference>
<dbReference type="Pfam" id="PF00199">
    <property type="entry name" value="Catalase"/>
    <property type="match status" value="1"/>
</dbReference>
<dbReference type="PIRSF" id="PIRSF038928">
    <property type="entry name" value="Catalase_clade1-3"/>
    <property type="match status" value="1"/>
</dbReference>
<dbReference type="PRINTS" id="PR00067">
    <property type="entry name" value="CATALASE"/>
</dbReference>
<dbReference type="SMART" id="SM01060">
    <property type="entry name" value="Catalase"/>
    <property type="match status" value="1"/>
</dbReference>
<dbReference type="SUPFAM" id="SSF56634">
    <property type="entry name" value="Heme-dependent catalase-like"/>
    <property type="match status" value="1"/>
</dbReference>
<dbReference type="PROSITE" id="PS00437">
    <property type="entry name" value="CATALASE_1"/>
    <property type="match status" value="1"/>
</dbReference>
<dbReference type="PROSITE" id="PS00438">
    <property type="entry name" value="CATALASE_2"/>
    <property type="match status" value="1"/>
</dbReference>
<dbReference type="PROSITE" id="PS51402">
    <property type="entry name" value="CATALASE_3"/>
    <property type="match status" value="1"/>
</dbReference>
<reference key="1">
    <citation type="submission" date="2011-06" db="EMBL/GenBank/DDBJ databases">
        <authorList>
            <person name="Florea S."/>
            <person name="Oeser B."/>
            <person name="Tudzynski P."/>
            <person name="Schardl C.L."/>
        </authorList>
    </citation>
    <scope>NUCLEOTIDE SEQUENCE [GENOMIC DNA]</scope>
    <source>
        <strain>20.1</strain>
    </source>
</reference>
<reference key="2">
    <citation type="journal article" date="2013" name="PLoS Genet.">
        <title>Plant-symbiotic fungi as chemical engineers: Multi-genome analysis of the Clavicipitaceae reveals dynamics of alkaloid loci.</title>
        <authorList>
            <person name="Schardl C.L."/>
            <person name="Young C.A."/>
            <person name="Hesse U."/>
            <person name="Amyotte S.G."/>
            <person name="Andreeva K."/>
            <person name="Calie P.J."/>
            <person name="Fleetwood D.J."/>
            <person name="Haws D.C."/>
            <person name="Moore N."/>
            <person name="Oeser B."/>
            <person name="Panaccione D.G."/>
            <person name="Schweri K.K."/>
            <person name="Voisey C.R."/>
            <person name="Farman M.L."/>
            <person name="Jaromczyk J.W."/>
            <person name="Roe B.A."/>
            <person name="O'Sullivan D.M."/>
            <person name="Scott B."/>
            <person name="Tudzynski P."/>
            <person name="An Z."/>
            <person name="Arnaoudova E.G."/>
            <person name="Bullock C.T."/>
            <person name="Charlton N.D."/>
            <person name="Chen L."/>
            <person name="Cox M."/>
            <person name="Dinkins R.D."/>
            <person name="Florea S."/>
            <person name="Glenn A.E."/>
            <person name="Gordon A."/>
            <person name="Gueldener U."/>
            <person name="Harris D.R."/>
            <person name="Hollin W."/>
            <person name="Jaromczyk J."/>
            <person name="Johnson R.D."/>
            <person name="Khan A.K."/>
            <person name="Leistner E."/>
            <person name="Leuchtmann A."/>
            <person name="Li C."/>
            <person name="Liu J."/>
            <person name="Liu J."/>
            <person name="Liu M."/>
            <person name="Mace W."/>
            <person name="Machado C."/>
            <person name="Nagabhyru P."/>
            <person name="Pan J."/>
            <person name="Schmid J."/>
            <person name="Sugawara K."/>
            <person name="Steiner U."/>
            <person name="Takach J.E."/>
            <person name="Tanaka E."/>
            <person name="Webb J.S."/>
            <person name="Wilson E.V."/>
            <person name="Wiseman J.L."/>
            <person name="Yoshida R."/>
            <person name="Zeng Z."/>
        </authorList>
    </citation>
    <scope>NUCLEOTIDE SEQUENCE [LARGE SCALE GENOMIC DNA]</scope>
    <source>
        <strain>20.1</strain>
    </source>
</reference>
<reference key="3">
    <citation type="journal article" date="2001" name="Appl. Microbiol. Biotechnol.">
        <title>Biotechnology and genetics of ergot alkaloids.</title>
        <authorList>
            <person name="Tudzynski P."/>
            <person name="Correia T."/>
            <person name="Keller U."/>
        </authorList>
    </citation>
    <scope>BIOTECHNOLOGY</scope>
    <source>
        <strain>P1 / 1029/N5</strain>
    </source>
</reference>
<reference key="4">
    <citation type="journal article" date="2003" name="Chem. Biol.">
        <title>Molecular cloning and analysis of the ergopeptine assembly system in the ergot fungus Claviceps purpurea.</title>
        <authorList>
            <person name="Correia T."/>
            <person name="Grammel N."/>
            <person name="Ortel I."/>
            <person name="Keller U."/>
            <person name="Tudzynski P."/>
        </authorList>
    </citation>
    <scope>FUNCTION</scope>
</reference>
<reference key="5">
    <citation type="journal article" date="2004" name="Fungal Genet. Biol.">
        <title>The determinant step in ergot alkaloid biosynthesis by an endophyte of perennial ryegrass.</title>
        <authorList>
            <person name="Wang J."/>
            <person name="Machado C."/>
            <person name="Panaccione D.G."/>
            <person name="Tsai H.-F."/>
            <person name="Schardl C.L."/>
        </authorList>
    </citation>
    <scope>FUNCTION</scope>
    <source>
        <strain>ATCC 20102 / Farmitalia FI 32/17</strain>
    </source>
</reference>
<reference key="6">
    <citation type="journal article" date="2005" name="Phytochemistry">
        <title>The ergot alkaloid gene cluster in Claviceps purpurea: extension of the cluster sequence and intra species evolution.</title>
        <authorList>
            <person name="Haarmann T."/>
            <person name="Machado C."/>
            <person name="Lubbe Y."/>
            <person name="Correia T."/>
            <person name="Schardl C.L."/>
            <person name="Panaccione D.G."/>
            <person name="Tudzynski P."/>
        </authorList>
    </citation>
    <scope>FUNCTION</scope>
    <scope>IDENTIFICATION IN THE EAS CLUSTER</scope>
</reference>
<reference key="7">
    <citation type="journal article" date="2006" name="ChemBioChem">
        <title>Identification of the cytochrome P450 monooxygenase that bridges the clavine and ergoline alkaloid pathways.</title>
        <authorList>
            <person name="Haarmann T."/>
            <person name="Ortel I."/>
            <person name="Tudzynski P."/>
            <person name="Keller U."/>
        </authorList>
    </citation>
    <scope>FUNCTION</scope>
    <source>
        <strain>P1 / 1029/N5</strain>
    </source>
</reference>
<reference key="8">
    <citation type="journal article" date="2007" name="Appl. Environ. Microbiol.">
        <title>A complex ergovaline gene cluster in epichloe endophytes of grasses.</title>
        <authorList>
            <person name="Fleetwood D.J."/>
            <person name="Scott B."/>
            <person name="Lane G.A."/>
            <person name="Tanaka A."/>
            <person name="Johnson R.D."/>
        </authorList>
    </citation>
    <scope>FUNCTION</scope>
</reference>
<reference key="9">
    <citation type="journal article" date="2007" name="Appl. Environ. Microbiol.">
        <title>Comparison of ergot alkaloid biosynthesis gene clusters in Claviceps species indicates loss of late pathway steps in evolution of C. fusiformis.</title>
        <authorList>
            <person name="Lorenz N."/>
            <person name="Wilson E.V."/>
            <person name="Machado C."/>
            <person name="Schardl C.L."/>
            <person name="Tudzynski P."/>
        </authorList>
    </citation>
    <scope>FUNCTION</scope>
</reference>
<reference key="10">
    <citation type="journal article" date="2008" name="Fungal Genet. Biol.">
        <title>Use of a nonhomologous end joining deficient strain (Deltaku70) of the ergot fungus Claviceps purpurea for identification of a nonribosomal peptide synthetase gene involved in ergotamine biosynthesis.</title>
        <authorList>
            <person name="Haarmann T."/>
            <person name="Lorenz N."/>
            <person name="Tudzynski P."/>
        </authorList>
    </citation>
    <scope>FUNCTION</scope>
</reference>
<reference key="11">
    <citation type="journal article" date="2009" name="J. Biol. Chem.">
        <title>Combinatorial assembly of simple and complex D-lysergic acid alkaloid peptide classes in the ergot fungus Claviceps purpurea.</title>
        <authorList>
            <person name="Ortel I."/>
            <person name="Keller U."/>
        </authorList>
    </citation>
    <scope>FUNCTION</scope>
</reference>
<reference key="12">
    <citation type="journal article" date="2010" name="Appl. Environ. Microbiol.">
        <title>Alkaloid cluster gene ccsA of the ergot fungus Claviceps purpurea encodes chanoclavine I synthase, a flavin adenine dinucleotide-containing oxidoreductase mediating the transformation of N-methyl-dimethylallyltryptophan to chanoclavine I.</title>
        <authorList>
            <person name="Lorenz N."/>
            <person name="Olsovska J."/>
            <person name="Sulc M."/>
            <person name="Tudzynski P."/>
        </authorList>
    </citation>
    <scope>FUNCTION</scope>
</reference>
<reference key="13">
    <citation type="journal article" date="2010" name="J. Am. Chem. Soc.">
        <title>Controlling a structural branch point in ergot alkaloid biosynthesis.</title>
        <authorList>
            <person name="Cheng J.Z."/>
            <person name="Coyle C.M."/>
            <person name="Panaccione D.G."/>
            <person name="O'Connor S.E."/>
        </authorList>
    </citation>
    <scope>FUNCTION</scope>
    <source>
        <strain>ATCC 20102 / Farmitalia FI 32/17</strain>
    </source>
</reference>
<reference key="14">
    <citation type="journal article" date="2011" name="Curr. Genet.">
        <title>Ergot cluster-encoded catalase is required for synthesis of chanoclavine-I in Aspergillus fumigatus.</title>
        <authorList>
            <person name="Goetz K.E."/>
            <person name="Coyle C.M."/>
            <person name="Cheng J.Z."/>
            <person name="O'Connor S.E."/>
            <person name="Panaccione D.G."/>
        </authorList>
    </citation>
    <scope>FUNCTION</scope>
</reference>
<reference key="15">
    <citation type="journal article" date="2011" name="Org. Biomol. Chem.">
        <title>New insights into ergot alkaloid biosynthesis in Claviceps purpurea: an agroclavine synthase EasG catalyses, via a non-enzymatic adduct with reduced glutathione, the conversion of chanoclavine-I aldehyde to agroclavine.</title>
        <authorList>
            <person name="Matuschek M."/>
            <person name="Wallwey C."/>
            <person name="Xie X."/>
            <person name="Li S.M."/>
        </authorList>
    </citation>
    <scope>FUNCTION</scope>
</reference>
<reference key="16">
    <citation type="journal article" date="2014" name="Chem. Biol.">
        <title>Cyclolization of D-lysergic acid alkaloid peptides.</title>
        <authorList>
            <person name="Havemann J."/>
            <person name="Vogel D."/>
            <person name="Loll B."/>
            <person name="Keller U."/>
        </authorList>
    </citation>
    <scope>FUNCTION</scope>
</reference>
<protein>
    <recommendedName>
        <fullName evidence="16">Catalase easC</fullName>
        <ecNumber evidence="18">1.11.-.-</ecNumber>
    </recommendedName>
    <alternativeName>
        <fullName evidence="15">Catalase 2</fullName>
    </alternativeName>
    <alternativeName>
        <fullName evidence="16">Ergot alkaloid synthesis protein C</fullName>
    </alternativeName>
</protein>
<proteinExistence type="inferred from homology"/>
<keyword id="KW-0017">Alkaloid metabolism</keyword>
<keyword id="KW-0349">Heme</keyword>
<keyword id="KW-0376">Hydrogen peroxide</keyword>
<keyword id="KW-0408">Iron</keyword>
<keyword id="KW-0479">Metal-binding</keyword>
<keyword id="KW-0560">Oxidoreductase</keyword>
<keyword id="KW-0575">Peroxidase</keyword>
<keyword id="KW-1185">Reference proteome</keyword>
<accession>M1WA44</accession>
<accession>G8GV63</accession>
<sequence length="473" mass="53510">MASEVSVASSGSEHSGAQKCPFQDPGLSSMDQDSRLRDILSRFNREKIPERAVHARGAGAYGEFEVTHDVSDICDIDMLLGVGKKTPCVVRFSTTTLERGSAESVRDVKGMAIKHFTQDGNWDWVCLNIPMFFIRDPSKFPDMVHAQRPDPTTNVANPSRWWEFVCNNHETLHMVMFQFSDFGTMFDYRSMSGYAAHAYKWVMPDGSWKYVHWFLASDQGPNFETGHQAKQIGADDAESATRDLYQSLERGEYPSWTVKVQVVDPEDAPKLPFNILDVTKHWNLGNYPPDIDVIPGRTLGKLTLKKGPQDYFEEIEQLAFSPSRLVHGVEASEDPMLQARLFAYPDAQKHRLGPNNLDLPANRTKKLADGSRPEKAEMAPQKVPSQEHADWVSQVKSSSWSEPNETDYKFPREFWKALPRLRGEAFQNSLVVNMAKSVSQVPADMRQKVYSTLALIADDLADRVRTMTEEIVE</sequence>
<evidence type="ECO:0000250" key="1">
    <source>
        <dbReference type="UniProtKB" id="P15202"/>
    </source>
</evidence>
<evidence type="ECO:0000250" key="2">
    <source>
        <dbReference type="UniProtKB" id="Q50EL0"/>
    </source>
</evidence>
<evidence type="ECO:0000256" key="3">
    <source>
        <dbReference type="SAM" id="MobiDB-lite"/>
    </source>
</evidence>
<evidence type="ECO:0000269" key="4">
    <source>
    </source>
</evidence>
<evidence type="ECO:0000269" key="5">
    <source>
    </source>
</evidence>
<evidence type="ECO:0000269" key="6">
    <source>
    </source>
</evidence>
<evidence type="ECO:0000269" key="7">
    <source>
    </source>
</evidence>
<evidence type="ECO:0000269" key="8">
    <source>
    </source>
</evidence>
<evidence type="ECO:0000269" key="9">
    <source>
    </source>
</evidence>
<evidence type="ECO:0000269" key="10">
    <source>
    </source>
</evidence>
<evidence type="ECO:0000269" key="11">
    <source>
    </source>
</evidence>
<evidence type="ECO:0000269" key="12">
    <source>
    </source>
</evidence>
<evidence type="ECO:0000269" key="13">
    <source>
    </source>
</evidence>
<evidence type="ECO:0000269" key="14">
    <source>
    </source>
</evidence>
<evidence type="ECO:0000303" key="15">
    <source>
    </source>
</evidence>
<evidence type="ECO:0000303" key="16">
    <source>
    </source>
</evidence>
<evidence type="ECO:0000305" key="17"/>
<evidence type="ECO:0000305" key="18">
    <source>
    </source>
</evidence>
<evidence type="ECO:0000305" key="19">
    <source>
    </source>
</evidence>
<evidence type="ECO:0000305" key="20">
    <source>
    </source>
</evidence>
<comment type="function">
    <text evidence="2 4 5 6 7 8 9 10 11 12 13 14 19 20">Catalase; part of the gene cluster that mediates the biosynthesis of fungal ergot alkaloid (PubMed:14700635, PubMed:14732265, PubMed:15904941, PubMed:17308187, PubMed:17720822). DmaW catalyzes the first step of ergot alkaloid biosynthesis by condensing dimethylallyl diphosphate (DMAP) and tryptophan to form 4-dimethylallyl-L-tryptophan (PubMed:14732265). The second step is catalyzed by the methyltransferase easF that methylates 4-dimethylallyl-L-tryptophan in the presence of S-adenosyl-L-methionine, resulting in the formation of 4-dimethylallyl-L-abrine (By similarity). The catalase easC and the FAD-dependent oxidoreductase easE then transform 4-dimethylallyl-L-abrine to chanoclavine-I which is further oxidized by easD in the presence of NAD(+), resulting in the formation of chanoclavine-I aldehyde (PubMed:20118373, PubMed:21409592). Agroclavine dehydrogenase easG then mediates the conversion of chanoclavine-I aldehyde to agroclavine via a non-enzymatic adduct reaction: the substrate is an iminium intermediate that is formed spontaneously from chanoclavine-I aldehyde in the presence of glutathione (PubMed:20735127, PubMed:21494745). The presence of easA is not required to complete this reaction (PubMed:21494745). Further conversion of agroclavine to paspalic acid is a two-step process involving oxidation of agroclavine to elymoclavine and of elymoclavine to paspalic acid, the second step being performed by the elymoclavine oxidase cloA (PubMed:16538694, PubMed:17720822). Paspalic acid is then further converted to D-lysergic acid (PubMed:15904941). Ergopeptines are assembled from D-lysergic acid and three different amino acids by the D-lysergyl-peptide-synthetases composed each of a monomudular and a trimodular nonribosomal peptide synthetase subunit (PubMed:14700635, PubMed:15904941). LpsB and lpsC encode the monomodular subunits responsible for D-lysergic acid activation and incorporation into the ergopeptine backbone (PubMed:14700635). LpsA1 and A2 subunits encode the trimodular nonribosomal peptide synthetase assembling the tripeptide portion of ergopeptines (PubMed:14700635). LpsA1 is responsible for formation of the major ergopeptine, ergotamine, and lpsA2 for alpha-ergocryptine, the minor ergopeptine of the total alkaloid mixture elaborated by C.purpurea (PubMed:17560817, PubMed:19139103). D-lysergyl-tripeptides are assembled by the nonribosomal peptide synthetases and released as N-(D-lysergyl-aminoacyl)-lactams (PubMed:24361048). Cyclolization of the D-lysergyl-tripeptides is performed by the Fe(2+)/2-ketoglutarate-dependent dioxygenase easH which introduces a hydroxyl group into N-(D-lysergyl-aminoacyl)-lactam at alpha-C of the aminoacyl residue followed by spontaneous condensation with the terminal lactam carbonyl group (PubMed:24361048).</text>
</comment>
<comment type="cofactor">
    <cofactor evidence="1">
        <name>heme</name>
        <dbReference type="ChEBI" id="CHEBI:30413"/>
    </cofactor>
</comment>
<comment type="pathway">
    <text evidence="18">Alkaloid biosynthesis; ergot alkaloid biosynthesis.</text>
</comment>
<comment type="similarity">
    <text evidence="17">Belongs to the catalase family.</text>
</comment>
<feature type="chain" id="PRO_0000439122" description="Catalase easC">
    <location>
        <begin position="1"/>
        <end position="473"/>
    </location>
</feature>
<feature type="region of interest" description="Disordered" evidence="3">
    <location>
        <begin position="1"/>
        <end position="31"/>
    </location>
</feature>
<feature type="region of interest" description="Disordered" evidence="3">
    <location>
        <begin position="352"/>
        <end position="389"/>
    </location>
</feature>
<feature type="compositionally biased region" description="Low complexity" evidence="3">
    <location>
        <begin position="1"/>
        <end position="15"/>
    </location>
</feature>
<feature type="compositionally biased region" description="Basic and acidic residues" evidence="3">
    <location>
        <begin position="366"/>
        <end position="377"/>
    </location>
</feature>
<feature type="active site" evidence="1">
    <location>
        <position position="54"/>
    </location>
</feature>
<feature type="binding site" description="axial binding residue" evidence="1">
    <location>
        <position position="344"/>
    </location>
    <ligand>
        <name>heme</name>
        <dbReference type="ChEBI" id="CHEBI:30413"/>
    </ligand>
    <ligandPart>
        <name>Fe</name>
        <dbReference type="ChEBI" id="CHEBI:18248"/>
    </ligandPart>
</feature>
<name>EASC_CLAP2</name>
<gene>
    <name evidence="16" type="primary">easC</name>
    <name evidence="15" type="synonym">cpcat2</name>
    <name type="ORF">CPUR_04081</name>
</gene>
<organism>
    <name type="scientific">Claviceps purpurea (strain 20.1)</name>
    <name type="common">Ergot fungus</name>
    <name type="synonym">Sphacelia segetum</name>
    <dbReference type="NCBI Taxonomy" id="1111077"/>
    <lineage>
        <taxon>Eukaryota</taxon>
        <taxon>Fungi</taxon>
        <taxon>Dikarya</taxon>
        <taxon>Ascomycota</taxon>
        <taxon>Pezizomycotina</taxon>
        <taxon>Sordariomycetes</taxon>
        <taxon>Hypocreomycetidae</taxon>
        <taxon>Hypocreales</taxon>
        <taxon>Clavicipitaceae</taxon>
        <taxon>Claviceps</taxon>
    </lineage>
</organism>